<sequence>MIDIPKRDTQADKDFSKLTFKLSKHKLKKTKKFDETSKFSTLHEAVNGNIQLFQEKKMKLENGVNTKKTEEKIKQIEEDEINYLLDTIPFIKEYDVKETVSDVTEQNSVFQVKSKNTHTNTFRKYLFHVEKVSNPTTLDAVTDRETVDQIYTCTCGGQMELWVNSTQSDLVCNECGATQPYIETYSGKESNEGMAYKRINHLAECLNALQGKEGTNVPQEVINAVKAEFKKNRISTTSEIKPSKVKQFLKKLGYSMYYENIYTIANMISGIPTLKLSRELEKRLKDMFFEIQEPFFRHKPPKRKNFLSYNYVLYKFSELLGEDDLLQYFPLLKCPKNLHNQDVIWKKICNDLQWEFIATV</sequence>
<comment type="function">
    <text evidence="2">Putative transcription factor.</text>
</comment>
<comment type="similarity">
    <text evidence="3">Belongs to the nucleo-cytoplasmic large DNA viruses (NCLDVs) VLTF-3 family.</text>
</comment>
<organism>
    <name type="scientific">Paramecium bursaria Chlorella virus 1</name>
    <name type="common">PBCV-1</name>
    <dbReference type="NCBI Taxonomy" id="10506"/>
    <lineage>
        <taxon>Viruses</taxon>
        <taxon>Varidnaviria</taxon>
        <taxon>Bamfordvirae</taxon>
        <taxon>Nucleocytoviricota</taxon>
        <taxon>Megaviricetes</taxon>
        <taxon>Algavirales</taxon>
        <taxon>Phycodnaviridae</taxon>
        <taxon>Chlorovirus</taxon>
    </lineage>
</organism>
<keyword id="KW-0479">Metal-binding</keyword>
<keyword id="KW-1185">Reference proteome</keyword>
<keyword id="KW-0804">Transcription</keyword>
<keyword id="KW-0805">Transcription regulation</keyword>
<keyword id="KW-0862">Zinc</keyword>
<keyword id="KW-0863">Zinc-finger</keyword>
<gene>
    <name type="ordered locus">A494R</name>
</gene>
<dbReference type="EMBL" id="JF411744">
    <property type="protein sequence ID" value="AAC96861.1"/>
    <property type="molecule type" value="Genomic_DNA"/>
</dbReference>
<dbReference type="PIR" id="T17996">
    <property type="entry name" value="T17996"/>
</dbReference>
<dbReference type="RefSeq" id="NP_048850.1">
    <property type="nucleotide sequence ID" value="NC_000852.5"/>
</dbReference>
<dbReference type="GeneID" id="918132"/>
<dbReference type="KEGG" id="vg:918132"/>
<dbReference type="OrthoDB" id="8889at10239"/>
<dbReference type="Proteomes" id="UP000000862">
    <property type="component" value="Genome"/>
</dbReference>
<dbReference type="GO" id="GO:0008270">
    <property type="term" value="F:zinc ion binding"/>
    <property type="evidence" value="ECO:0007669"/>
    <property type="project" value="UniProtKB-KW"/>
</dbReference>
<dbReference type="GO" id="GO:0046782">
    <property type="term" value="P:regulation of viral transcription"/>
    <property type="evidence" value="ECO:0007669"/>
    <property type="project" value="InterPro"/>
</dbReference>
<dbReference type="InterPro" id="IPR007031">
    <property type="entry name" value="Poxvirus_VLTF3"/>
</dbReference>
<dbReference type="InterPro" id="IPR014900">
    <property type="entry name" value="VLTF-3_Zn_ribbon"/>
</dbReference>
<dbReference type="Pfam" id="PF08792">
    <property type="entry name" value="A2L_zn_ribbon"/>
    <property type="match status" value="1"/>
</dbReference>
<dbReference type="Pfam" id="PF04947">
    <property type="entry name" value="Pox_VLTF3"/>
    <property type="match status" value="1"/>
</dbReference>
<feature type="chain" id="PRO_0000309552" description="Putative transcription factor A494R">
    <location>
        <begin position="1"/>
        <end position="360"/>
    </location>
</feature>
<feature type="zinc finger region" evidence="1">
    <location>
        <begin position="153"/>
        <end position="175"/>
    </location>
</feature>
<accession>Q98544</accession>
<evidence type="ECO:0000255" key="1"/>
<evidence type="ECO:0000269" key="2">
    <source>
    </source>
</evidence>
<evidence type="ECO:0000305" key="3"/>
<name>Y494R_PBCV1</name>
<proteinExistence type="inferred from homology"/>
<reference key="1">
    <citation type="journal article" date="1996" name="Virology">
        <title>Analysis of 76 kb of the chlorella virus PBCV-1 330-kb genome: map positions 182 to 258.</title>
        <authorList>
            <person name="Kutish G.F."/>
            <person name="Li Y."/>
            <person name="Lu Z."/>
            <person name="Furuta M."/>
            <person name="Rock D.L."/>
            <person name="van Etten J.L."/>
        </authorList>
    </citation>
    <scope>NUCLEOTIDE SEQUENCE [LARGE SCALE GENOMIC DNA]</scope>
</reference>
<reference key="2">
    <citation type="journal article" date="2006" name="Virus Res.">
        <title>Evolutionary genomics of nucleo-cytoplasmic large DNA viruses.</title>
        <authorList>
            <person name="Iyer L.M."/>
            <person name="Balaji S."/>
            <person name="Koonin E.V."/>
            <person name="Aravind L."/>
        </authorList>
    </citation>
    <scope>FUNCTION</scope>
</reference>
<protein>
    <recommendedName>
        <fullName>Putative transcription factor A494R</fullName>
    </recommendedName>
</protein>
<organismHost>
    <name type="scientific">Chlorella</name>
    <dbReference type="NCBI Taxonomy" id="3071"/>
</organismHost>